<gene>
    <name evidence="1" type="primary">murD</name>
    <name type="ordered locus">NGK_1824</name>
</gene>
<organism>
    <name type="scientific">Neisseria gonorrhoeae (strain NCCP11945)</name>
    <dbReference type="NCBI Taxonomy" id="521006"/>
    <lineage>
        <taxon>Bacteria</taxon>
        <taxon>Pseudomonadati</taxon>
        <taxon>Pseudomonadota</taxon>
        <taxon>Betaproteobacteria</taxon>
        <taxon>Neisseriales</taxon>
        <taxon>Neisseriaceae</taxon>
        <taxon>Neisseria</taxon>
    </lineage>
</organism>
<comment type="function">
    <text evidence="1">Cell wall formation. Catalyzes the addition of glutamate to the nucleotide precursor UDP-N-acetylmuramoyl-L-alanine (UMA).</text>
</comment>
<comment type="catalytic activity">
    <reaction evidence="1">
        <text>UDP-N-acetyl-alpha-D-muramoyl-L-alanine + D-glutamate + ATP = UDP-N-acetyl-alpha-D-muramoyl-L-alanyl-D-glutamate + ADP + phosphate + H(+)</text>
        <dbReference type="Rhea" id="RHEA:16429"/>
        <dbReference type="ChEBI" id="CHEBI:15378"/>
        <dbReference type="ChEBI" id="CHEBI:29986"/>
        <dbReference type="ChEBI" id="CHEBI:30616"/>
        <dbReference type="ChEBI" id="CHEBI:43474"/>
        <dbReference type="ChEBI" id="CHEBI:83898"/>
        <dbReference type="ChEBI" id="CHEBI:83900"/>
        <dbReference type="ChEBI" id="CHEBI:456216"/>
        <dbReference type="EC" id="6.3.2.9"/>
    </reaction>
</comment>
<comment type="pathway">
    <text evidence="1">Cell wall biogenesis; peptidoglycan biosynthesis.</text>
</comment>
<comment type="subcellular location">
    <subcellularLocation>
        <location evidence="1">Cytoplasm</location>
    </subcellularLocation>
</comment>
<comment type="similarity">
    <text evidence="1">Belongs to the MurCDEF family.</text>
</comment>
<protein>
    <recommendedName>
        <fullName evidence="1">UDP-N-acetylmuramoylalanine--D-glutamate ligase</fullName>
        <ecNumber evidence="1">6.3.2.9</ecNumber>
    </recommendedName>
    <alternativeName>
        <fullName evidence="1">D-glutamic acid-adding enzyme</fullName>
    </alternativeName>
    <alternativeName>
        <fullName evidence="1">UDP-N-acetylmuramoyl-L-alanyl-D-glutamate synthetase</fullName>
    </alternativeName>
</protein>
<dbReference type="EC" id="6.3.2.9" evidence="1"/>
<dbReference type="EMBL" id="CP001050">
    <property type="protein sequence ID" value="ACF30463.1"/>
    <property type="molecule type" value="Genomic_DNA"/>
</dbReference>
<dbReference type="RefSeq" id="WP_012503871.1">
    <property type="nucleotide sequence ID" value="NC_011035.1"/>
</dbReference>
<dbReference type="SMR" id="B4RQC7"/>
<dbReference type="KEGG" id="ngk:NGK_1824"/>
<dbReference type="HOGENOM" id="CLU_032540_1_0_4"/>
<dbReference type="UniPathway" id="UPA00219"/>
<dbReference type="Proteomes" id="UP000002564">
    <property type="component" value="Chromosome"/>
</dbReference>
<dbReference type="GO" id="GO:0005737">
    <property type="term" value="C:cytoplasm"/>
    <property type="evidence" value="ECO:0007669"/>
    <property type="project" value="UniProtKB-SubCell"/>
</dbReference>
<dbReference type="GO" id="GO:0005524">
    <property type="term" value="F:ATP binding"/>
    <property type="evidence" value="ECO:0007669"/>
    <property type="project" value="UniProtKB-UniRule"/>
</dbReference>
<dbReference type="GO" id="GO:0008764">
    <property type="term" value="F:UDP-N-acetylmuramoylalanine-D-glutamate ligase activity"/>
    <property type="evidence" value="ECO:0007669"/>
    <property type="project" value="UniProtKB-UniRule"/>
</dbReference>
<dbReference type="GO" id="GO:0051301">
    <property type="term" value="P:cell division"/>
    <property type="evidence" value="ECO:0007669"/>
    <property type="project" value="UniProtKB-KW"/>
</dbReference>
<dbReference type="GO" id="GO:0071555">
    <property type="term" value="P:cell wall organization"/>
    <property type="evidence" value="ECO:0007669"/>
    <property type="project" value="UniProtKB-KW"/>
</dbReference>
<dbReference type="GO" id="GO:0009252">
    <property type="term" value="P:peptidoglycan biosynthetic process"/>
    <property type="evidence" value="ECO:0007669"/>
    <property type="project" value="UniProtKB-UniRule"/>
</dbReference>
<dbReference type="GO" id="GO:0008360">
    <property type="term" value="P:regulation of cell shape"/>
    <property type="evidence" value="ECO:0007669"/>
    <property type="project" value="UniProtKB-KW"/>
</dbReference>
<dbReference type="Gene3D" id="3.90.190.20">
    <property type="entry name" value="Mur ligase, C-terminal domain"/>
    <property type="match status" value="1"/>
</dbReference>
<dbReference type="Gene3D" id="3.40.1190.10">
    <property type="entry name" value="Mur-like, catalytic domain"/>
    <property type="match status" value="1"/>
</dbReference>
<dbReference type="Gene3D" id="3.40.50.720">
    <property type="entry name" value="NAD(P)-binding Rossmann-like Domain"/>
    <property type="match status" value="1"/>
</dbReference>
<dbReference type="HAMAP" id="MF_00639">
    <property type="entry name" value="MurD"/>
    <property type="match status" value="1"/>
</dbReference>
<dbReference type="InterPro" id="IPR036565">
    <property type="entry name" value="Mur-like_cat_sf"/>
</dbReference>
<dbReference type="InterPro" id="IPR004101">
    <property type="entry name" value="Mur_ligase_C"/>
</dbReference>
<dbReference type="InterPro" id="IPR036615">
    <property type="entry name" value="Mur_ligase_C_dom_sf"/>
</dbReference>
<dbReference type="InterPro" id="IPR013221">
    <property type="entry name" value="Mur_ligase_cen"/>
</dbReference>
<dbReference type="InterPro" id="IPR005762">
    <property type="entry name" value="MurD"/>
</dbReference>
<dbReference type="NCBIfam" id="TIGR01087">
    <property type="entry name" value="murD"/>
    <property type="match status" value="1"/>
</dbReference>
<dbReference type="PANTHER" id="PTHR43692">
    <property type="entry name" value="UDP-N-ACETYLMURAMOYLALANINE--D-GLUTAMATE LIGASE"/>
    <property type="match status" value="1"/>
</dbReference>
<dbReference type="PANTHER" id="PTHR43692:SF1">
    <property type="entry name" value="UDP-N-ACETYLMURAMOYLALANINE--D-GLUTAMATE LIGASE"/>
    <property type="match status" value="1"/>
</dbReference>
<dbReference type="Pfam" id="PF02875">
    <property type="entry name" value="Mur_ligase_C"/>
    <property type="match status" value="1"/>
</dbReference>
<dbReference type="Pfam" id="PF08245">
    <property type="entry name" value="Mur_ligase_M"/>
    <property type="match status" value="1"/>
</dbReference>
<dbReference type="Pfam" id="PF21799">
    <property type="entry name" value="MurD-like_N"/>
    <property type="match status" value="1"/>
</dbReference>
<dbReference type="SUPFAM" id="SSF51984">
    <property type="entry name" value="MurCD N-terminal domain"/>
    <property type="match status" value="1"/>
</dbReference>
<dbReference type="SUPFAM" id="SSF53623">
    <property type="entry name" value="MurD-like peptide ligases, catalytic domain"/>
    <property type="match status" value="1"/>
</dbReference>
<dbReference type="SUPFAM" id="SSF53244">
    <property type="entry name" value="MurD-like peptide ligases, peptide-binding domain"/>
    <property type="match status" value="1"/>
</dbReference>
<accession>B4RQC7</accession>
<name>MURD_NEIG2</name>
<evidence type="ECO:0000255" key="1">
    <source>
        <dbReference type="HAMAP-Rule" id="MF_00639"/>
    </source>
</evidence>
<feature type="chain" id="PRO_1000130866" description="UDP-N-acetylmuramoylalanine--D-glutamate ligase">
    <location>
        <begin position="1"/>
        <end position="445"/>
    </location>
</feature>
<feature type="binding site" evidence="1">
    <location>
        <begin position="117"/>
        <end position="123"/>
    </location>
    <ligand>
        <name>ATP</name>
        <dbReference type="ChEBI" id="CHEBI:30616"/>
    </ligand>
</feature>
<sequence>MTFQNKKTLVAGLGGTGISMIAYLRKNGAEVAAYDAELKAERVAQIGKMFDGLVFYTGRLKDALDNGFDILALSPGISERQPDIEAFKQNGGRVLGDIELLADIVNRRGDKVIAITGSNGKTTVTSLVGYLCIKCGLDTVIAGNIGTPVLEAELQREGKKADVWVLELSSFQLENTESLRPTAATVMNISEDHLDRYDDLLDYAHTKAKIFRGDGVQVLNADDVFCRAMKRAGREVKRFSLEHEADFWLERGTGCLKQGNEDLISTQDIPLQGLHNAANVMAAVALCEAVGLPREALLEHVKTFQGLPHRVEKIGEKNGVVFIDDSKGTNVGATAAAIAGLQNPLFVILGGMGKGQDFTPLRDALKDKAKGVFLIGVDAPQIRRDLDGCGLNLTDCVTLEEAVQTAYAQAEAGDIVLLSPACASFDMFKGYAHRSEVFIEAFKAL</sequence>
<keyword id="KW-0067">ATP-binding</keyword>
<keyword id="KW-0131">Cell cycle</keyword>
<keyword id="KW-0132">Cell division</keyword>
<keyword id="KW-0133">Cell shape</keyword>
<keyword id="KW-0961">Cell wall biogenesis/degradation</keyword>
<keyword id="KW-0963">Cytoplasm</keyword>
<keyword id="KW-0436">Ligase</keyword>
<keyword id="KW-0547">Nucleotide-binding</keyword>
<keyword id="KW-0573">Peptidoglycan synthesis</keyword>
<proteinExistence type="inferred from homology"/>
<reference key="1">
    <citation type="journal article" date="2008" name="J. Bacteriol.">
        <title>Complete genome sequence of Neisseria gonorrhoeae NCCP11945.</title>
        <authorList>
            <person name="Chung G.T."/>
            <person name="Yoo J.S."/>
            <person name="Oh H.B."/>
            <person name="Lee Y.S."/>
            <person name="Cha S.H."/>
            <person name="Kim S.J."/>
            <person name="Yoo C.K."/>
        </authorList>
    </citation>
    <scope>NUCLEOTIDE SEQUENCE [LARGE SCALE GENOMIC DNA]</scope>
    <source>
        <strain>NCCP11945</strain>
    </source>
</reference>